<name>ATPD_CYACA</name>
<organism>
    <name type="scientific">Cyanidium caldarium</name>
    <name type="common">Red alga</name>
    <dbReference type="NCBI Taxonomy" id="2771"/>
    <lineage>
        <taxon>Eukaryota</taxon>
        <taxon>Rhodophyta</taxon>
        <taxon>Bangiophyceae</taxon>
        <taxon>Cyanidiales</taxon>
        <taxon>Cyanidiaceae</taxon>
        <taxon>Cyanidium</taxon>
    </lineage>
</organism>
<evidence type="ECO:0000255" key="1">
    <source>
        <dbReference type="HAMAP-Rule" id="MF_01416"/>
    </source>
</evidence>
<sequence length="183" mass="21232">MILLLTNSKIIYPYSEALFSIAKDQEKFEVIKNDMELFVTFTKNLNGFKKFLETPLINKNKKIKVVKDVFSKILNSTTLNFISILINKNRIMFVSNISEKYNQLVLKDKSVKLVKIACARQLSEKQAQALSEVLKHKFKCLSVKLIFNIEPELIAGFKIFIESQVIDVSLQGELKEFEWYLTK</sequence>
<gene>
    <name evidence="1" type="primary">atpD</name>
</gene>
<comment type="function">
    <text evidence="1">F(1)F(0) ATP synthase produces ATP from ADP in the presence of a proton or sodium gradient. F-type ATPases consist of two structural domains, F(1) containing the extramembraneous catalytic core and F(0) containing the membrane proton channel, linked together by a central stalk and a peripheral stalk. During catalysis, ATP synthesis in the catalytic domain of F(1) is coupled via a rotary mechanism of the central stalk subunits to proton translocation.</text>
</comment>
<comment type="function">
    <text evidence="1">This protein is part of the stalk that links CF(0) to CF(1). It either transmits conformational changes from CF(0) to CF(1) or is implicated in proton conduction.</text>
</comment>
<comment type="subunit">
    <text evidence="1">F-type ATPases have 2 components, F(1) - the catalytic core - and F(0) - the membrane proton channel. F(1) has five subunits: alpha(3), beta(3), gamma(1), delta(1), epsilon(1). CF(0) has four main subunits: a(1), b(1), b'(1) and c(10-14). The alpha and beta chains form an alternating ring which encloses part of the gamma chain. F(1) is attached to F(0) by a central stalk formed by the gamma and epsilon chains, while a peripheral stalk is formed by the delta, b and b' chains.</text>
</comment>
<comment type="subcellular location">
    <subcellularLocation>
        <location evidence="1">Plastid</location>
        <location evidence="1">Chloroplast thylakoid membrane</location>
        <topology evidence="1">Peripheral membrane protein</topology>
    </subcellularLocation>
</comment>
<comment type="similarity">
    <text evidence="1">Belongs to the ATPase delta chain family.</text>
</comment>
<protein>
    <recommendedName>
        <fullName evidence="1">ATP synthase subunit delta, chloroplastic</fullName>
    </recommendedName>
    <alternativeName>
        <fullName evidence="1">ATP synthase F(1) sector subunit delta</fullName>
    </alternativeName>
    <alternativeName>
        <fullName evidence="1">F-type ATPase subunit delta</fullName>
    </alternativeName>
</protein>
<geneLocation type="chloroplast"/>
<reference key="1">
    <citation type="journal article" date="2000" name="J. Mol. Evol.">
        <title>The structure and gene repertoire of an ancient red algal plastid genome.</title>
        <authorList>
            <person name="Gloeckner G."/>
            <person name="Rosenthal A."/>
            <person name="Valentin K.-U."/>
        </authorList>
    </citation>
    <scope>NUCLEOTIDE SEQUENCE [LARGE SCALE GENOMIC DNA]</scope>
    <source>
        <strain>RK-1</strain>
    </source>
</reference>
<dbReference type="EMBL" id="AF022186">
    <property type="protein sequence ID" value="AAF13006.1"/>
    <property type="molecule type" value="Genomic_DNA"/>
</dbReference>
<dbReference type="RefSeq" id="NP_045040.1">
    <property type="nucleotide sequence ID" value="NC_001840.1"/>
</dbReference>
<dbReference type="SMR" id="Q9TM27"/>
<dbReference type="GeneID" id="800144"/>
<dbReference type="GO" id="GO:0009535">
    <property type="term" value="C:chloroplast thylakoid membrane"/>
    <property type="evidence" value="ECO:0007669"/>
    <property type="project" value="UniProtKB-SubCell"/>
</dbReference>
<dbReference type="GO" id="GO:0045259">
    <property type="term" value="C:proton-transporting ATP synthase complex"/>
    <property type="evidence" value="ECO:0007669"/>
    <property type="project" value="UniProtKB-KW"/>
</dbReference>
<dbReference type="GO" id="GO:0046933">
    <property type="term" value="F:proton-transporting ATP synthase activity, rotational mechanism"/>
    <property type="evidence" value="ECO:0007669"/>
    <property type="project" value="UniProtKB-UniRule"/>
</dbReference>
<dbReference type="Gene3D" id="1.10.520.20">
    <property type="entry name" value="N-terminal domain of the delta subunit of the F1F0-ATP synthase"/>
    <property type="match status" value="1"/>
</dbReference>
<dbReference type="HAMAP" id="MF_01416">
    <property type="entry name" value="ATP_synth_delta_bact"/>
    <property type="match status" value="1"/>
</dbReference>
<dbReference type="InterPro" id="IPR026015">
    <property type="entry name" value="ATP_synth_OSCP/delta_N_sf"/>
</dbReference>
<dbReference type="InterPro" id="IPR000711">
    <property type="entry name" value="ATPase_OSCP/dsu"/>
</dbReference>
<dbReference type="NCBIfam" id="TIGR01145">
    <property type="entry name" value="ATP_synt_delta"/>
    <property type="match status" value="1"/>
</dbReference>
<dbReference type="PANTHER" id="PTHR11910">
    <property type="entry name" value="ATP SYNTHASE DELTA CHAIN"/>
    <property type="match status" value="1"/>
</dbReference>
<dbReference type="Pfam" id="PF00213">
    <property type="entry name" value="OSCP"/>
    <property type="match status" value="1"/>
</dbReference>
<dbReference type="PRINTS" id="PR00125">
    <property type="entry name" value="ATPASEDELTA"/>
</dbReference>
<dbReference type="SUPFAM" id="SSF47928">
    <property type="entry name" value="N-terminal domain of the delta subunit of the F1F0-ATP synthase"/>
    <property type="match status" value="1"/>
</dbReference>
<proteinExistence type="inferred from homology"/>
<feature type="chain" id="PRO_0000193500" description="ATP synthase subunit delta, chloroplastic">
    <location>
        <begin position="1"/>
        <end position="183"/>
    </location>
</feature>
<accession>Q9TM27</accession>
<keyword id="KW-0066">ATP synthesis</keyword>
<keyword id="KW-0139">CF(1)</keyword>
<keyword id="KW-0150">Chloroplast</keyword>
<keyword id="KW-0375">Hydrogen ion transport</keyword>
<keyword id="KW-0406">Ion transport</keyword>
<keyword id="KW-0472">Membrane</keyword>
<keyword id="KW-0934">Plastid</keyword>
<keyword id="KW-0793">Thylakoid</keyword>
<keyword id="KW-0813">Transport</keyword>